<organismHost>
    <name type="scientific">Cynomys gunnisoni</name>
    <name type="common">Gunnison's prairie dog</name>
    <name type="synonym">Spermophilus gunnisoni</name>
    <dbReference type="NCBI Taxonomy" id="45479"/>
</organismHost>
<organismHost>
    <name type="scientific">Cynomys leucurus</name>
    <name type="common">White-tailed prairie dog</name>
    <dbReference type="NCBI Taxonomy" id="99825"/>
</organismHost>
<organismHost>
    <name type="scientific">Cynomys ludovicianus</name>
    <name type="common">Black-tailed prairie dog</name>
    <dbReference type="NCBI Taxonomy" id="45480"/>
</organismHost>
<organismHost>
    <name type="scientific">Cynomys mexicanus</name>
    <name type="common">Mexican prairie dog</name>
    <dbReference type="NCBI Taxonomy" id="99826"/>
</organismHost>
<organismHost>
    <name type="scientific">Cynomys parvidens</name>
    <name type="common">Utah prairie dog</name>
    <dbReference type="NCBI Taxonomy" id="99827"/>
</organismHost>
<organismHost>
    <name type="scientific">Gliridae</name>
    <name type="common">dormice</name>
    <dbReference type="NCBI Taxonomy" id="30650"/>
</organismHost>
<organismHost>
    <name type="scientific">Heliosciurus ruwenzorii</name>
    <name type="common">Ruwenzori sun squirrel</name>
    <dbReference type="NCBI Taxonomy" id="226685"/>
</organismHost>
<organismHost>
    <name type="scientific">Homo sapiens</name>
    <name type="common">Human</name>
    <dbReference type="NCBI Taxonomy" id="9606"/>
</organismHost>
<organismHost>
    <name type="scientific">Mus musculus</name>
    <name type="common">Mouse</name>
    <dbReference type="NCBI Taxonomy" id="10090"/>
</organismHost>
<reference key="1">
    <citation type="journal article" date="2022" name="J. Infect. Dis.">
        <title>Exportation of Monkeypox virus from the African continent.</title>
        <authorList>
            <person name="Mauldin M.R."/>
            <person name="McCollum A.M."/>
            <person name="Nakazawa Y.J."/>
            <person name="Mandra A."/>
            <person name="Whitehouse E.R."/>
            <person name="Davidson W."/>
            <person name="Zhao H."/>
            <person name="Gao J."/>
            <person name="Li Y."/>
            <person name="Doty J."/>
            <person name="Yinka-Ogunleye A."/>
            <person name="Akinpelu A."/>
            <person name="Aruna O."/>
            <person name="Naidoo D."/>
            <person name="Lewandowski K."/>
            <person name="Afrough B."/>
            <person name="Graham V."/>
            <person name="Aarons E."/>
            <person name="Hewson R."/>
            <person name="Vipond R."/>
            <person name="Dunning J."/>
            <person name="Chand M."/>
            <person name="Brown C."/>
            <person name="Cohen-Gihon I."/>
            <person name="Erez N."/>
            <person name="Shifman O."/>
            <person name="Israeli O."/>
            <person name="Sharon M."/>
            <person name="Schwartz E."/>
            <person name="Beth-Din A."/>
            <person name="Zvi A."/>
            <person name="Mak T.M."/>
            <person name="Ng Y.K."/>
            <person name="Cui L."/>
            <person name="Lin R.T.P."/>
            <person name="Olson V.A."/>
            <person name="Brooks T."/>
            <person name="Paran N."/>
            <person name="Ihekweazu C."/>
            <person name="Reynolds M.G."/>
        </authorList>
    </citation>
    <scope>NUCLEOTIDE SEQUENCE [LARGE SCALE GENOMIC DNA]</scope>
    <source>
        <strain>MPXV-M5312_HM12_Rivers</strain>
    </source>
</reference>
<protein>
    <recommendedName>
        <fullName>Pseudokinase OPG198</fullName>
    </recommendedName>
</protein>
<organism>
    <name type="scientific">Monkeypox virus</name>
    <dbReference type="NCBI Taxonomy" id="10244"/>
    <lineage>
        <taxon>Viruses</taxon>
        <taxon>Varidnaviria</taxon>
        <taxon>Bamfordvirae</taxon>
        <taxon>Nucleocytoviricota</taxon>
        <taxon>Pokkesviricetes</taxon>
        <taxon>Chitovirales</taxon>
        <taxon>Poxviridae</taxon>
        <taxon>Chordopoxvirinae</taxon>
        <taxon>Orthopoxvirus</taxon>
    </lineage>
</organism>
<sequence length="282" mass="33242">MESFKYCFDNDGKKWIIGNTLYSGNSILYKVRKNFTSSFYNYVMKIDHKSHKPLLSEIRFYISVLDPLTINNWTRERGIKYLAIPDLYGIGETDDYMFFIIKNLGRVFAPKDSESVFEACVTMINTLEFIHSQGFTHGKIEPMNILIRNKRISLIDYSRTNKLYKSGTHIDYNEDMITSGNINYMCVDNHLGATVSRRGDLEMLGYCMIEWFGGKLPWKNESSIKVIKQKKEYKQFIATFFEDCFPEGNEPLELVRYIELVYMLDYSQTPNYDRLRRLFIQD</sequence>
<accession>A0A7H0DNF8</accession>
<gene>
    <name type="primary">OPG198</name>
    <name type="ORF">MPXVgp172</name>
</gene>
<feature type="chain" id="PRO_0000457610" description="Pseudokinase OPG198">
    <location>
        <begin position="1"/>
        <end position="282"/>
    </location>
</feature>
<feature type="domain" description="Protein kinase" evidence="2">
    <location>
        <begin position="1"/>
        <end position="282"/>
    </location>
</feature>
<feature type="binding site" evidence="2">
    <location>
        <position position="1"/>
    </location>
    <ligand>
        <name>ATP</name>
        <dbReference type="ChEBI" id="CHEBI:30616"/>
    </ligand>
</feature>
<feature type="binding site" evidence="2">
    <location>
        <position position="30"/>
    </location>
    <ligand>
        <name>ATP</name>
        <dbReference type="ChEBI" id="CHEBI:30616"/>
    </ligand>
</feature>
<comment type="function">
    <text evidence="1">Pseudokinase that plays a role in viral DNA replication repression by activating the antiviral protein BANF1 and inhibiting the activity of host VRK1, a cellular modulator of BANF1.</text>
</comment>
<comment type="activity regulation">
    <text evidence="1">Both catalytically active kinases B1/VPK1 and host VRK2 repress B12 inhibitory activity in a B1/VPK1 deletion mutant strain.</text>
</comment>
<comment type="subunit">
    <text evidence="1">Interacts with B1/VPK1. Interacts with host VRK1. Interacts with host VRK2.</text>
</comment>
<comment type="subcellular location">
    <subcellularLocation>
        <location evidence="1">Host nucleus</location>
    </subcellularLocation>
</comment>
<comment type="similarity">
    <text evidence="2">Belongs to the protein kinase superfamily. Ser/Thr protein kinase family. Poxviruses subfamily.</text>
</comment>
<evidence type="ECO:0000250" key="1">
    <source>
        <dbReference type="UniProtKB" id="P24362"/>
    </source>
</evidence>
<evidence type="ECO:0000255" key="2">
    <source>
        <dbReference type="PROSITE-ProRule" id="PRU00159"/>
    </source>
</evidence>
<name>KRB2_MONPV</name>
<dbReference type="EMBL" id="MT903340">
    <property type="protein sequence ID" value="QNP13041.1"/>
    <property type="molecule type" value="Genomic_DNA"/>
</dbReference>
<dbReference type="RefSeq" id="YP_010377168.1">
    <property type="nucleotide sequence ID" value="NC_063383.1"/>
</dbReference>
<dbReference type="SMR" id="A0A7H0DNF8"/>
<dbReference type="GeneID" id="72551582"/>
<dbReference type="Proteomes" id="UP000516359">
    <property type="component" value="Genome"/>
</dbReference>
<dbReference type="GO" id="GO:0042025">
    <property type="term" value="C:host cell nucleus"/>
    <property type="evidence" value="ECO:0007669"/>
    <property type="project" value="UniProtKB-SubCell"/>
</dbReference>
<dbReference type="GO" id="GO:0005524">
    <property type="term" value="F:ATP binding"/>
    <property type="evidence" value="ECO:0007669"/>
    <property type="project" value="UniProtKB-KW"/>
</dbReference>
<dbReference type="GO" id="GO:0004672">
    <property type="term" value="F:protein kinase activity"/>
    <property type="evidence" value="ECO:0007669"/>
    <property type="project" value="InterPro"/>
</dbReference>
<dbReference type="Gene3D" id="1.10.510.10">
    <property type="entry name" value="Transferase(Phosphotransferase) domain 1"/>
    <property type="match status" value="1"/>
</dbReference>
<dbReference type="InterPro" id="IPR050235">
    <property type="entry name" value="CK1_Ser-Thr_kinase"/>
</dbReference>
<dbReference type="InterPro" id="IPR011009">
    <property type="entry name" value="Kinase-like_dom_sf"/>
</dbReference>
<dbReference type="InterPro" id="IPR000719">
    <property type="entry name" value="Prot_kinase_dom"/>
</dbReference>
<dbReference type="PANTHER" id="PTHR11909">
    <property type="entry name" value="CASEIN KINASE-RELATED"/>
    <property type="match status" value="1"/>
</dbReference>
<dbReference type="SUPFAM" id="SSF56112">
    <property type="entry name" value="Protein kinase-like (PK-like)"/>
    <property type="match status" value="1"/>
</dbReference>
<dbReference type="PROSITE" id="PS50011">
    <property type="entry name" value="PROTEIN_KINASE_DOM"/>
    <property type="match status" value="1"/>
</dbReference>
<proteinExistence type="inferred from homology"/>
<keyword id="KW-0067">ATP-binding</keyword>
<keyword id="KW-0244">Early protein</keyword>
<keyword id="KW-1048">Host nucleus</keyword>
<keyword id="KW-0547">Nucleotide-binding</keyword>
<keyword id="KW-1185">Reference proteome</keyword>